<dbReference type="EMBL" id="BC074077">
    <property type="protein sequence ID" value="AAH74077.1"/>
    <property type="molecule type" value="mRNA"/>
</dbReference>
<dbReference type="RefSeq" id="NP_001009897.1">
    <property type="nucleotide sequence ID" value="NM_001009897.2"/>
</dbReference>
<dbReference type="SMR" id="Q6GMH3"/>
<dbReference type="FunCoup" id="Q6GMH3">
    <property type="interactions" value="1739"/>
</dbReference>
<dbReference type="STRING" id="7955.ENSDARP00000065005"/>
<dbReference type="PaxDb" id="7955-ENSDARP00000024168"/>
<dbReference type="Ensembl" id="ENSDART00000065006">
    <property type="protein sequence ID" value="ENSDARP00000065005"/>
    <property type="gene ID" value="ENSDARG00000094792"/>
</dbReference>
<dbReference type="GeneID" id="100310784"/>
<dbReference type="KEGG" id="dre:100310784"/>
<dbReference type="AGR" id="ZFIN:ZDB-GENE-030131-7638"/>
<dbReference type="CTD" id="11344"/>
<dbReference type="ZFIN" id="ZDB-GENE-030131-7638">
    <property type="gene designation" value="twf2a"/>
</dbReference>
<dbReference type="HOGENOM" id="CLU_031995_1_0_1"/>
<dbReference type="InParanoid" id="Q6GMH3"/>
<dbReference type="OMA" id="AMTHQTG"/>
<dbReference type="OrthoDB" id="10006997at2759"/>
<dbReference type="PhylomeDB" id="Q6GMH3"/>
<dbReference type="TreeFam" id="TF352598"/>
<dbReference type="PRO" id="PR:Q6GMH3"/>
<dbReference type="Proteomes" id="UP000000437">
    <property type="component" value="Chromosome 6"/>
</dbReference>
<dbReference type="Bgee" id="ENSDARG00000094792">
    <property type="expression patterns" value="Expressed in muscle tissue and 14 other cell types or tissues"/>
</dbReference>
<dbReference type="GO" id="GO:0005884">
    <property type="term" value="C:actin filament"/>
    <property type="evidence" value="ECO:0000318"/>
    <property type="project" value="GO_Central"/>
</dbReference>
<dbReference type="GO" id="GO:0005737">
    <property type="term" value="C:cytoplasm"/>
    <property type="evidence" value="ECO:0000318"/>
    <property type="project" value="GO_Central"/>
</dbReference>
<dbReference type="GO" id="GO:0030016">
    <property type="term" value="C:myofibril"/>
    <property type="evidence" value="ECO:0000318"/>
    <property type="project" value="GO_Central"/>
</dbReference>
<dbReference type="GO" id="GO:0048471">
    <property type="term" value="C:perinuclear region of cytoplasm"/>
    <property type="evidence" value="ECO:0007669"/>
    <property type="project" value="UniProtKB-SubCell"/>
</dbReference>
<dbReference type="GO" id="GO:0051015">
    <property type="term" value="F:actin filament binding"/>
    <property type="evidence" value="ECO:0000318"/>
    <property type="project" value="GO_Central"/>
</dbReference>
<dbReference type="GO" id="GO:0003785">
    <property type="term" value="F:actin monomer binding"/>
    <property type="evidence" value="ECO:0000318"/>
    <property type="project" value="GO_Central"/>
</dbReference>
<dbReference type="GO" id="GO:0030042">
    <property type="term" value="P:actin filament depolymerization"/>
    <property type="evidence" value="ECO:0000318"/>
    <property type="project" value="GO_Central"/>
</dbReference>
<dbReference type="GO" id="GO:0051016">
    <property type="term" value="P:barbed-end actin filament capping"/>
    <property type="evidence" value="ECO:0000318"/>
    <property type="project" value="GO_Central"/>
</dbReference>
<dbReference type="GO" id="GO:0010976">
    <property type="term" value="P:positive regulation of neuron projection development"/>
    <property type="evidence" value="ECO:0000318"/>
    <property type="project" value="GO_Central"/>
</dbReference>
<dbReference type="GO" id="GO:0010591">
    <property type="term" value="P:regulation of lamellipodium assembly"/>
    <property type="evidence" value="ECO:0000318"/>
    <property type="project" value="GO_Central"/>
</dbReference>
<dbReference type="CDD" id="cd11284">
    <property type="entry name" value="ADF_Twf-C_like"/>
    <property type="match status" value="1"/>
</dbReference>
<dbReference type="CDD" id="cd11285">
    <property type="entry name" value="ADF_Twf-N_like"/>
    <property type="match status" value="1"/>
</dbReference>
<dbReference type="FunFam" id="3.40.20.10:FF:000007">
    <property type="entry name" value="Twinfilin-1 isoform 1"/>
    <property type="match status" value="1"/>
</dbReference>
<dbReference type="FunFam" id="3.40.20.10:FF:000012">
    <property type="entry name" value="Twinfilin-1 isoform 1"/>
    <property type="match status" value="1"/>
</dbReference>
<dbReference type="Gene3D" id="3.40.20.10">
    <property type="entry name" value="Severin"/>
    <property type="match status" value="2"/>
</dbReference>
<dbReference type="InterPro" id="IPR002108">
    <property type="entry name" value="ADF-H"/>
</dbReference>
<dbReference type="InterPro" id="IPR029006">
    <property type="entry name" value="ADF-H/Gelsolin-like_dom_sf"/>
</dbReference>
<dbReference type="InterPro" id="IPR028458">
    <property type="entry name" value="Twinfilin"/>
</dbReference>
<dbReference type="PANTHER" id="PTHR13759">
    <property type="entry name" value="TWINFILIN"/>
    <property type="match status" value="1"/>
</dbReference>
<dbReference type="PANTHER" id="PTHR13759:SF9">
    <property type="entry name" value="TWINFILIN-2"/>
    <property type="match status" value="1"/>
</dbReference>
<dbReference type="Pfam" id="PF00241">
    <property type="entry name" value="Cofilin_ADF"/>
    <property type="match status" value="2"/>
</dbReference>
<dbReference type="SMART" id="SM00102">
    <property type="entry name" value="ADF"/>
    <property type="match status" value="2"/>
</dbReference>
<dbReference type="SUPFAM" id="SSF55753">
    <property type="entry name" value="Actin depolymerizing proteins"/>
    <property type="match status" value="2"/>
</dbReference>
<dbReference type="PROSITE" id="PS51263">
    <property type="entry name" value="ADF_H"/>
    <property type="match status" value="2"/>
</dbReference>
<proteinExistence type="evidence at transcript level"/>
<protein>
    <recommendedName>
        <fullName>Twinfilin-2</fullName>
    </recommendedName>
    <alternativeName>
        <fullName>Twinfilin-1-like protein</fullName>
    </alternativeName>
</protein>
<accession>Q6GMH3</accession>
<keyword id="KW-0009">Actin-binding</keyword>
<keyword id="KW-0963">Cytoplasm</keyword>
<keyword id="KW-0206">Cytoskeleton</keyword>
<keyword id="KW-1185">Reference proteome</keyword>
<keyword id="KW-0677">Repeat</keyword>
<evidence type="ECO:0000250" key="1"/>
<evidence type="ECO:0000255" key="2">
    <source>
        <dbReference type="PROSITE-ProRule" id="PRU00599"/>
    </source>
</evidence>
<evidence type="ECO:0000256" key="3">
    <source>
        <dbReference type="SAM" id="MobiDB-lite"/>
    </source>
</evidence>
<evidence type="ECO:0000305" key="4"/>
<sequence length="347" mass="39859">MFLVLVVTEELREFLARARNGTGRLIQVLIRDEQLVLGAYREPRHSWDKDYDPVLLPLLDPLEPCYILYRLDSKNAQGYEWLFISWSPDQSPVRQKMLYAATRATVKKEFGGGHVKDEMFGTVEEDICLQGYLRHITSCSAPAPLTVAEQELQRIKITEVKAEISVDPKHQTLQGLAFPLQAEAKRALKQLAERRINYIQLKLDTEKETIDLVHTSPTDIRDLPCRIPLDTPRYHFFLYKHSHEGDYLESVVFIYSMPGYSCSIKERMLYSSCKSRLLDEVERDFHLEVAKKLEIDSGEELTEEYLYDEVHPKQHAHKQAFAKPRGPAGKRGNKRLIKGGGENGGNS</sequence>
<gene>
    <name type="primary">twf2</name>
    <name type="synonym">ptk9l</name>
    <name type="synonym">twf1l</name>
    <name type="ORF">zgc:91817</name>
</gene>
<reference key="1">
    <citation type="submission" date="2004-06" db="EMBL/GenBank/DDBJ databases">
        <authorList>
            <consortium name="NIH - Zebrafish Gene Collection (ZGC) project"/>
        </authorList>
    </citation>
    <scope>NUCLEOTIDE SEQUENCE [LARGE SCALE MRNA]</scope>
</reference>
<feature type="chain" id="PRO_0000233140" description="Twinfilin-2">
    <location>
        <begin position="1"/>
        <end position="347"/>
    </location>
</feature>
<feature type="domain" description="ADF-H 1" evidence="2">
    <location>
        <begin position="3"/>
        <end position="137"/>
    </location>
</feature>
<feature type="domain" description="ADF-H 2" evidence="2">
    <location>
        <begin position="175"/>
        <end position="311"/>
    </location>
</feature>
<feature type="region of interest" description="Disordered" evidence="3">
    <location>
        <begin position="314"/>
        <end position="347"/>
    </location>
</feature>
<feature type="compositionally biased region" description="Gly residues" evidence="3">
    <location>
        <begin position="338"/>
        <end position="347"/>
    </location>
</feature>
<organism>
    <name type="scientific">Danio rerio</name>
    <name type="common">Zebrafish</name>
    <name type="synonym">Brachydanio rerio</name>
    <dbReference type="NCBI Taxonomy" id="7955"/>
    <lineage>
        <taxon>Eukaryota</taxon>
        <taxon>Metazoa</taxon>
        <taxon>Chordata</taxon>
        <taxon>Craniata</taxon>
        <taxon>Vertebrata</taxon>
        <taxon>Euteleostomi</taxon>
        <taxon>Actinopterygii</taxon>
        <taxon>Neopterygii</taxon>
        <taxon>Teleostei</taxon>
        <taxon>Ostariophysi</taxon>
        <taxon>Cypriniformes</taxon>
        <taxon>Danionidae</taxon>
        <taxon>Danioninae</taxon>
        <taxon>Danio</taxon>
    </lineage>
</organism>
<comment type="function">
    <text evidence="1">Actin-binding protein involved in motile and morphological processes. Inhibits actin polymerization, likely by sequestering G-actin (By similarity).</text>
</comment>
<comment type="subunit">
    <text evidence="1">Interacts with G-actin; ADP-actin form and capping protein (CP).</text>
</comment>
<comment type="subcellular location">
    <subcellularLocation>
        <location evidence="1">Cytoplasm</location>
        <location evidence="1">Cytoskeleton</location>
    </subcellularLocation>
    <subcellularLocation>
        <location evidence="1">Cytoplasm</location>
        <location evidence="1">Perinuclear region</location>
    </subcellularLocation>
    <text evidence="1">Perinuclear and G-actin-rich cortical actin structure sublocalization.</text>
</comment>
<comment type="similarity">
    <text evidence="4">Belongs to the actin-binding proteins ADF family. Twinfilin subfamily.</text>
</comment>
<comment type="online information" name="Protein Spotlight">
    <link uri="https://www.proteinspotlight.org/back_issues/073"/>
    <text>Molecular embrace - Issue 73 of August 2006</text>
</comment>
<name>TWF2_DANRE</name>